<dbReference type="EMBL" id="L19263">
    <property type="protein sequence ID" value="AAA18511.1"/>
    <property type="molecule type" value="Genomic_DNA"/>
</dbReference>
<dbReference type="SMR" id="P34812"/>
<dbReference type="GO" id="GO:0009535">
    <property type="term" value="C:chloroplast thylakoid membrane"/>
    <property type="evidence" value="ECO:0007669"/>
    <property type="project" value="UniProtKB-SubCell"/>
</dbReference>
<dbReference type="GO" id="GO:0030089">
    <property type="term" value="C:phycobilisome"/>
    <property type="evidence" value="ECO:0007669"/>
    <property type="project" value="UniProtKB-KW"/>
</dbReference>
<dbReference type="GO" id="GO:0015979">
    <property type="term" value="P:photosynthesis"/>
    <property type="evidence" value="ECO:0007669"/>
    <property type="project" value="UniProtKB-KW"/>
</dbReference>
<dbReference type="CDD" id="cd12126">
    <property type="entry name" value="APC_beta"/>
    <property type="match status" value="1"/>
</dbReference>
<dbReference type="Gene3D" id="1.10.490.20">
    <property type="entry name" value="Phycocyanins"/>
    <property type="match status" value="1"/>
</dbReference>
<dbReference type="InterPro" id="IPR006245">
    <property type="entry name" value="Allophycocyanin_b"/>
</dbReference>
<dbReference type="InterPro" id="IPR009050">
    <property type="entry name" value="Globin-like_sf"/>
</dbReference>
<dbReference type="InterPro" id="IPR012128">
    <property type="entry name" value="Phycobilisome_asu/bsu"/>
</dbReference>
<dbReference type="InterPro" id="IPR038719">
    <property type="entry name" value="Phycobilisome_asu/bsu_sf"/>
</dbReference>
<dbReference type="NCBIfam" id="TIGR01337">
    <property type="entry name" value="apcB"/>
    <property type="match status" value="1"/>
</dbReference>
<dbReference type="PANTHER" id="PTHR34011:SF3">
    <property type="entry name" value="ALLOPHYCOCYANIN BETA CHAIN"/>
    <property type="match status" value="1"/>
</dbReference>
<dbReference type="PANTHER" id="PTHR34011">
    <property type="entry name" value="PHYCOBILISOME 32.1 KDA LINKER POLYPEPTIDE, PHYCOCYANIN-ASSOCIATED, ROD 2-RELATED"/>
    <property type="match status" value="1"/>
</dbReference>
<dbReference type="Pfam" id="PF00502">
    <property type="entry name" value="Phycobilisome"/>
    <property type="match status" value="1"/>
</dbReference>
<dbReference type="PIRSF" id="PIRSF000081">
    <property type="entry name" value="Phycocyanin"/>
    <property type="match status" value="1"/>
</dbReference>
<dbReference type="SUPFAM" id="SSF46458">
    <property type="entry name" value="Globin-like"/>
    <property type="match status" value="1"/>
</dbReference>
<proteinExistence type="inferred from homology"/>
<geneLocation type="chloroplast"/>
<accession>P34812</accession>
<organism>
    <name type="scientific">Aglaothamnion neglectum</name>
    <name type="common">Red alga</name>
    <dbReference type="NCBI Taxonomy" id="2765"/>
    <lineage>
        <taxon>Eukaryota</taxon>
        <taxon>Rhodophyta</taxon>
        <taxon>Florideophyceae</taxon>
        <taxon>Rhodymeniophycidae</taxon>
        <taxon>Ceramiales</taxon>
        <taxon>Callithamniaceae</taxon>
        <taxon>Aglaothamnion</taxon>
    </lineage>
</organism>
<evidence type="ECO:0000250" key="1"/>
<evidence type="ECO:0000305" key="2"/>
<reference key="1">
    <citation type="journal article" date="1993" name="J. Phycol.">
        <title>The phycobilisome B18 subunit gene of allophycocyanin is located on the plastid genome in Aglaothamnion neglectum (Rhodophyta) and cotranscribed with an unidentified open reading frame.</title>
        <authorList>
            <person name="Apt K.E."/>
            <person name="Grossman A.R."/>
        </authorList>
    </citation>
    <scope>NUCLEOTIDE SEQUENCE [GENOMIC DNA]</scope>
</reference>
<feature type="chain" id="PRO_0000199089" description="Allophycocyanin subunit beta-18">
    <location>
        <begin position="1"/>
        <end position="171"/>
    </location>
</feature>
<feature type="binding site" description="covalent" evidence="1">
    <location>
        <position position="82"/>
    </location>
    <ligand>
        <name>(2R,3E)-phycocyanobilin</name>
        <dbReference type="ChEBI" id="CHEBI:85275"/>
    </ligand>
</feature>
<feature type="modified residue" description="N4-methylasparagine" evidence="1">
    <location>
        <position position="72"/>
    </location>
</feature>
<protein>
    <recommendedName>
        <fullName>Allophycocyanin subunit beta-18</fullName>
        <shortName>Allophycocyanin subunit B18</shortName>
    </recommendedName>
</protein>
<comment type="function">
    <text>Light-harvesting photosynthetic bile pigment-protein from the phycobiliprotein complex. Allophycocyanin has a maximum absorption at approximately 650 nanometers.</text>
</comment>
<comment type="subunit">
    <text evidence="1">Heterodimer of an alpha and a beta chain.</text>
</comment>
<comment type="subcellular location">
    <subcellularLocation>
        <location evidence="1">Plastid</location>
        <location evidence="1">Chloroplast thylakoid membrane</location>
        <topology evidence="1">Peripheral membrane protein</topology>
        <orientation evidence="1">Stromal side</orientation>
    </subcellularLocation>
    <text evidence="1">Forms the core of the phycobilisome.</text>
</comment>
<comment type="PTM">
    <text evidence="1">Contains one covalently linked bilin chromophore.</text>
</comment>
<comment type="similarity">
    <text evidence="2">Belongs to the phycobiliprotein family.</text>
</comment>
<gene>
    <name type="primary">apcF</name>
</gene>
<name>APCF_AGLNE</name>
<keyword id="KW-0042">Antenna complex</keyword>
<keyword id="KW-0089">Bile pigment</keyword>
<keyword id="KW-0150">Chloroplast</keyword>
<keyword id="KW-0157">Chromophore</keyword>
<keyword id="KW-0249">Electron transport</keyword>
<keyword id="KW-0472">Membrane</keyword>
<keyword id="KW-0488">Methylation</keyword>
<keyword id="KW-0602">Photosynthesis</keyword>
<keyword id="KW-0605">Phycobilisome</keyword>
<keyword id="KW-0934">Plastid</keyword>
<keyword id="KW-0793">Thylakoid</keyword>
<keyword id="KW-0813">Transport</keyword>
<sequence length="171" mass="19664">MQDTITNILNKYDLTGKYLDNNALTQITTYLNTALQRLEVVEIIQSQSSKIIKEAAARMYSEQPELLRPGGNSYTTRKYAMCLRDIEYYLRYATYAIIAGNNDILNERVLDGLKDTYNSLNVPIAPTVRSIQIMEEIIHNEISKQDLKIIKKSIISEPFDHMIQNLSEQDI</sequence>